<proteinExistence type="inferred from homology"/>
<organism>
    <name type="scientific">Limosilactobacillus reuteri (strain DSM 20016)</name>
    <name type="common">Lactobacillus reuteri</name>
    <dbReference type="NCBI Taxonomy" id="557436"/>
    <lineage>
        <taxon>Bacteria</taxon>
        <taxon>Bacillati</taxon>
        <taxon>Bacillota</taxon>
        <taxon>Bacilli</taxon>
        <taxon>Lactobacillales</taxon>
        <taxon>Lactobacillaceae</taxon>
        <taxon>Limosilactobacillus</taxon>
    </lineage>
</organism>
<feature type="chain" id="PRO_1000060261" description="ATP-dependent Clp protease proteolytic subunit">
    <location>
        <begin position="1"/>
        <end position="197"/>
    </location>
</feature>
<feature type="active site" description="Nucleophile" evidence="1">
    <location>
        <position position="98"/>
    </location>
</feature>
<feature type="active site" evidence="1">
    <location>
        <position position="123"/>
    </location>
</feature>
<keyword id="KW-0963">Cytoplasm</keyword>
<keyword id="KW-0378">Hydrolase</keyword>
<keyword id="KW-0645">Protease</keyword>
<keyword id="KW-1185">Reference proteome</keyword>
<keyword id="KW-0720">Serine protease</keyword>
<comment type="function">
    <text evidence="1">Cleaves peptides in various proteins in a process that requires ATP hydrolysis. Has a chymotrypsin-like activity. Plays a major role in the degradation of misfolded proteins.</text>
</comment>
<comment type="catalytic activity">
    <reaction evidence="1">
        <text>Hydrolysis of proteins to small peptides in the presence of ATP and magnesium. alpha-casein is the usual test substrate. In the absence of ATP, only oligopeptides shorter than five residues are hydrolyzed (such as succinyl-Leu-Tyr-|-NHMec, and Leu-Tyr-Leu-|-Tyr-Trp, in which cleavage of the -Tyr-|-Leu- and -Tyr-|-Trp bonds also occurs).</text>
        <dbReference type="EC" id="3.4.21.92"/>
    </reaction>
</comment>
<comment type="subunit">
    <text evidence="1">Fourteen ClpP subunits assemble into 2 heptameric rings which stack back to back to give a disk-like structure with a central cavity, resembling the structure of eukaryotic proteasomes.</text>
</comment>
<comment type="subcellular location">
    <subcellularLocation>
        <location evidence="1">Cytoplasm</location>
    </subcellularLocation>
</comment>
<comment type="similarity">
    <text evidence="1">Belongs to the peptidase S14 family.</text>
</comment>
<dbReference type="EC" id="3.4.21.92" evidence="1"/>
<dbReference type="EMBL" id="CP000705">
    <property type="protein sequence ID" value="ABQ82658.1"/>
    <property type="molecule type" value="Genomic_DNA"/>
</dbReference>
<dbReference type="RefSeq" id="WP_003666435.1">
    <property type="nucleotide sequence ID" value="NZ_AZDD01000014.1"/>
</dbReference>
<dbReference type="SMR" id="A5VII4"/>
<dbReference type="STRING" id="557436.Lreu_0389"/>
<dbReference type="MEROPS" id="S14.001"/>
<dbReference type="GeneID" id="77192159"/>
<dbReference type="KEGG" id="lre:Lreu_0389"/>
<dbReference type="PATRIC" id="fig|557436.17.peg.431"/>
<dbReference type="eggNOG" id="COG0740">
    <property type="taxonomic scope" value="Bacteria"/>
</dbReference>
<dbReference type="HOGENOM" id="CLU_058707_3_2_9"/>
<dbReference type="Proteomes" id="UP000001991">
    <property type="component" value="Chromosome"/>
</dbReference>
<dbReference type="GO" id="GO:0005737">
    <property type="term" value="C:cytoplasm"/>
    <property type="evidence" value="ECO:0007669"/>
    <property type="project" value="UniProtKB-SubCell"/>
</dbReference>
<dbReference type="GO" id="GO:0009368">
    <property type="term" value="C:endopeptidase Clp complex"/>
    <property type="evidence" value="ECO:0007669"/>
    <property type="project" value="TreeGrafter"/>
</dbReference>
<dbReference type="GO" id="GO:0004176">
    <property type="term" value="F:ATP-dependent peptidase activity"/>
    <property type="evidence" value="ECO:0007669"/>
    <property type="project" value="InterPro"/>
</dbReference>
<dbReference type="GO" id="GO:0051117">
    <property type="term" value="F:ATPase binding"/>
    <property type="evidence" value="ECO:0007669"/>
    <property type="project" value="TreeGrafter"/>
</dbReference>
<dbReference type="GO" id="GO:0004252">
    <property type="term" value="F:serine-type endopeptidase activity"/>
    <property type="evidence" value="ECO:0007669"/>
    <property type="project" value="UniProtKB-UniRule"/>
</dbReference>
<dbReference type="GO" id="GO:0006515">
    <property type="term" value="P:protein quality control for misfolded or incompletely synthesized proteins"/>
    <property type="evidence" value="ECO:0007669"/>
    <property type="project" value="TreeGrafter"/>
</dbReference>
<dbReference type="CDD" id="cd07017">
    <property type="entry name" value="S14_ClpP_2"/>
    <property type="match status" value="1"/>
</dbReference>
<dbReference type="FunFam" id="3.90.226.10:FF:000001">
    <property type="entry name" value="ATP-dependent Clp protease proteolytic subunit"/>
    <property type="match status" value="1"/>
</dbReference>
<dbReference type="Gene3D" id="3.90.226.10">
    <property type="entry name" value="2-enoyl-CoA Hydratase, Chain A, domain 1"/>
    <property type="match status" value="1"/>
</dbReference>
<dbReference type="HAMAP" id="MF_00444">
    <property type="entry name" value="ClpP"/>
    <property type="match status" value="1"/>
</dbReference>
<dbReference type="InterPro" id="IPR001907">
    <property type="entry name" value="ClpP"/>
</dbReference>
<dbReference type="InterPro" id="IPR029045">
    <property type="entry name" value="ClpP/crotonase-like_dom_sf"/>
</dbReference>
<dbReference type="InterPro" id="IPR023562">
    <property type="entry name" value="ClpP/TepA"/>
</dbReference>
<dbReference type="InterPro" id="IPR033135">
    <property type="entry name" value="ClpP_His_AS"/>
</dbReference>
<dbReference type="InterPro" id="IPR018215">
    <property type="entry name" value="ClpP_Ser_AS"/>
</dbReference>
<dbReference type="NCBIfam" id="TIGR00493">
    <property type="entry name" value="clpP"/>
    <property type="match status" value="1"/>
</dbReference>
<dbReference type="NCBIfam" id="NF001368">
    <property type="entry name" value="PRK00277.1"/>
    <property type="match status" value="1"/>
</dbReference>
<dbReference type="NCBIfam" id="NF009205">
    <property type="entry name" value="PRK12553.1"/>
    <property type="match status" value="1"/>
</dbReference>
<dbReference type="PANTHER" id="PTHR10381">
    <property type="entry name" value="ATP-DEPENDENT CLP PROTEASE PROTEOLYTIC SUBUNIT"/>
    <property type="match status" value="1"/>
</dbReference>
<dbReference type="PANTHER" id="PTHR10381:SF70">
    <property type="entry name" value="ATP-DEPENDENT CLP PROTEASE PROTEOLYTIC SUBUNIT"/>
    <property type="match status" value="1"/>
</dbReference>
<dbReference type="Pfam" id="PF00574">
    <property type="entry name" value="CLP_protease"/>
    <property type="match status" value="1"/>
</dbReference>
<dbReference type="PRINTS" id="PR00127">
    <property type="entry name" value="CLPPROTEASEP"/>
</dbReference>
<dbReference type="SUPFAM" id="SSF52096">
    <property type="entry name" value="ClpP/crotonase"/>
    <property type="match status" value="1"/>
</dbReference>
<dbReference type="PROSITE" id="PS00382">
    <property type="entry name" value="CLP_PROTEASE_HIS"/>
    <property type="match status" value="1"/>
</dbReference>
<dbReference type="PROSITE" id="PS00381">
    <property type="entry name" value="CLP_PROTEASE_SER"/>
    <property type="match status" value="1"/>
</dbReference>
<protein>
    <recommendedName>
        <fullName evidence="1">ATP-dependent Clp protease proteolytic subunit</fullName>
        <ecNumber evidence="1">3.4.21.92</ecNumber>
    </recommendedName>
    <alternativeName>
        <fullName evidence="1">Endopeptidase Clp</fullName>
    </alternativeName>
</protein>
<accession>A5VII4</accession>
<gene>
    <name evidence="1" type="primary">clpP</name>
    <name type="ordered locus">Lreu_0389</name>
</gene>
<reference key="1">
    <citation type="journal article" date="2011" name="PLoS Genet.">
        <title>The evolution of host specialization in the vertebrate gut symbiont Lactobacillus reuteri.</title>
        <authorList>
            <person name="Frese S.A."/>
            <person name="Benson A.K."/>
            <person name="Tannock G.W."/>
            <person name="Loach D.M."/>
            <person name="Kim J."/>
            <person name="Zhang M."/>
            <person name="Oh P.L."/>
            <person name="Heng N.C."/>
            <person name="Patil P.B."/>
            <person name="Juge N."/>
            <person name="Mackenzie D.A."/>
            <person name="Pearson B.M."/>
            <person name="Lapidus A."/>
            <person name="Dalin E."/>
            <person name="Tice H."/>
            <person name="Goltsman E."/>
            <person name="Land M."/>
            <person name="Hauser L."/>
            <person name="Ivanova N."/>
            <person name="Kyrpides N.C."/>
            <person name="Walter J."/>
        </authorList>
    </citation>
    <scope>NUCLEOTIDE SEQUENCE [LARGE SCALE GENOMIC DNA]</scope>
    <source>
        <strain>DSM 20016</strain>
    </source>
</reference>
<evidence type="ECO:0000255" key="1">
    <source>
        <dbReference type="HAMAP-Rule" id="MF_00444"/>
    </source>
</evidence>
<sequence length="197" mass="21434">MNLVPTVIEQSSRGERAYDIYSRLLKDRIIMLSGPIEDEMANSIVAQLLFLDAQDSTKDIYLYINSPGGVVTSGMAIYDTMNFIKADVQTIVIGMAASMASVLVSSGAKGKRFGLPHSQVLIHQPSGGAQGQQTEIEIAATEILKTRKMLNGILAKNSGQPIEKIQADTERDHYLTAQEAVDYGLLDGVMENNSKLK</sequence>
<name>CLPP_LIMRD</name>